<comment type="subcellular location">
    <subcellularLocation>
        <location evidence="2">Cell membrane</location>
        <topology evidence="2">Multi-pass membrane protein</topology>
    </subcellularLocation>
</comment>
<feature type="signal peptide" evidence="1">
    <location>
        <begin position="1"/>
        <end position="19"/>
    </location>
</feature>
<feature type="chain" id="PRO_0000014065" description="Uncharacterized protein Rv0048c">
    <location>
        <begin position="20"/>
        <end position="289"/>
    </location>
</feature>
<feature type="transmembrane region" description="Helical" evidence="1">
    <location>
        <begin position="90"/>
        <end position="110"/>
    </location>
</feature>
<feature type="transmembrane region" description="Helical" evidence="1">
    <location>
        <begin position="257"/>
        <end position="277"/>
    </location>
</feature>
<keyword id="KW-1003">Cell membrane</keyword>
<keyword id="KW-0472">Membrane</keyword>
<keyword id="KW-1185">Reference proteome</keyword>
<keyword id="KW-0732">Signal</keyword>
<keyword id="KW-0812">Transmembrane</keyword>
<keyword id="KW-1133">Transmembrane helix</keyword>
<reference key="1">
    <citation type="journal article" date="1998" name="Nature">
        <title>Deciphering the biology of Mycobacterium tuberculosis from the complete genome sequence.</title>
        <authorList>
            <person name="Cole S.T."/>
            <person name="Brosch R."/>
            <person name="Parkhill J."/>
            <person name="Garnier T."/>
            <person name="Churcher C.M."/>
            <person name="Harris D.E."/>
            <person name="Gordon S.V."/>
            <person name="Eiglmeier K."/>
            <person name="Gas S."/>
            <person name="Barry C.E. III"/>
            <person name="Tekaia F."/>
            <person name="Badcock K."/>
            <person name="Basham D."/>
            <person name="Brown D."/>
            <person name="Chillingworth T."/>
            <person name="Connor R."/>
            <person name="Davies R.M."/>
            <person name="Devlin K."/>
            <person name="Feltwell T."/>
            <person name="Gentles S."/>
            <person name="Hamlin N."/>
            <person name="Holroyd S."/>
            <person name="Hornsby T."/>
            <person name="Jagels K."/>
            <person name="Krogh A."/>
            <person name="McLean J."/>
            <person name="Moule S."/>
            <person name="Murphy L.D."/>
            <person name="Oliver S."/>
            <person name="Osborne J."/>
            <person name="Quail M.A."/>
            <person name="Rajandream M.A."/>
            <person name="Rogers J."/>
            <person name="Rutter S."/>
            <person name="Seeger K."/>
            <person name="Skelton S."/>
            <person name="Squares S."/>
            <person name="Squares R."/>
            <person name="Sulston J.E."/>
            <person name="Taylor K."/>
            <person name="Whitehead S."/>
            <person name="Barrell B.G."/>
        </authorList>
    </citation>
    <scope>NUCLEOTIDE SEQUENCE [LARGE SCALE GENOMIC DNA]</scope>
    <source>
        <strain>ATCC 25618 / H37Rv</strain>
    </source>
</reference>
<reference key="2">
    <citation type="journal article" date="2011" name="Mol. Cell. Proteomics">
        <title>Proteogenomic analysis of Mycobacterium tuberculosis by high resolution mass spectrometry.</title>
        <authorList>
            <person name="Kelkar D.S."/>
            <person name="Kumar D."/>
            <person name="Kumar P."/>
            <person name="Balakrishnan L."/>
            <person name="Muthusamy B."/>
            <person name="Yadav A.K."/>
            <person name="Shrivastava P."/>
            <person name="Marimuthu A."/>
            <person name="Anand S."/>
            <person name="Sundaram H."/>
            <person name="Kingsbury R."/>
            <person name="Harsha H.C."/>
            <person name="Nair B."/>
            <person name="Prasad T.S."/>
            <person name="Chauhan D.S."/>
            <person name="Katoch K."/>
            <person name="Katoch V.M."/>
            <person name="Kumar P."/>
            <person name="Chaerkady R."/>
            <person name="Ramachandran S."/>
            <person name="Dash D."/>
            <person name="Pandey A."/>
        </authorList>
    </citation>
    <scope>IDENTIFICATION BY MASS SPECTROMETRY [LARGE SCALE ANALYSIS]</scope>
    <source>
        <strain>ATCC 25618 / H37Rv</strain>
    </source>
</reference>
<organism>
    <name type="scientific">Mycobacterium tuberculosis (strain ATCC 25618 / H37Rv)</name>
    <dbReference type="NCBI Taxonomy" id="83332"/>
    <lineage>
        <taxon>Bacteria</taxon>
        <taxon>Bacillati</taxon>
        <taxon>Actinomycetota</taxon>
        <taxon>Actinomycetes</taxon>
        <taxon>Mycobacteriales</taxon>
        <taxon>Mycobacteriaceae</taxon>
        <taxon>Mycobacterium</taxon>
        <taxon>Mycobacterium tuberculosis complex</taxon>
    </lineage>
</organism>
<proteinExistence type="evidence at protein level"/>
<sequence>MAKWLGAPLARGVSTATRAKDSDRQDACRILDDALRDGELSMEEHRERVSAATKAVTLGDLQRLVADLQVESAPAQMPALKSRAKRTELGLLAAAFVASVLLGVGIGWGVYGNTRSPLDFTSDPGAKPDGIAPVVLTPPRQLHSLGGLTGLLEQTRKRFGDTMGYRLVIYPEYASLDRVDPADDRRVLAYTYRGGWGDATSSAKSIADVSVVDLSKFDAKTAVGIMRGAPETLGLKQSDVKSMYLIVEPVKDPTTPAALSLSLYVSSDYGGGYLVFAGDGTIKHVSYPS</sequence>
<gene>
    <name type="ordered locus">Rv0048c</name>
    <name type="ORF">MTCY21D4.11c</name>
</gene>
<accession>P9WM87</accession>
<accession>L0T2E7</accession>
<accession>P71705</accession>
<name>Y048_MYCTU</name>
<dbReference type="EMBL" id="AL123456">
    <property type="protein sequence ID" value="CCP42770.1"/>
    <property type="molecule type" value="Genomic_DNA"/>
</dbReference>
<dbReference type="PIR" id="H70912">
    <property type="entry name" value="H70912"/>
</dbReference>
<dbReference type="RefSeq" id="NP_214562.1">
    <property type="nucleotide sequence ID" value="NC_000962.3"/>
</dbReference>
<dbReference type="RefSeq" id="WP_003907183.1">
    <property type="nucleotide sequence ID" value="NZ_NVQJ01000005.1"/>
</dbReference>
<dbReference type="STRING" id="83332.Rv0048c"/>
<dbReference type="PaxDb" id="83332-Rv0048c"/>
<dbReference type="DNASU" id="887027"/>
<dbReference type="GeneID" id="887027"/>
<dbReference type="KEGG" id="mtu:Rv0048c"/>
<dbReference type="KEGG" id="mtv:RVBD_0048c"/>
<dbReference type="TubercuList" id="Rv0048c"/>
<dbReference type="eggNOG" id="ENOG50343CC">
    <property type="taxonomic scope" value="Bacteria"/>
</dbReference>
<dbReference type="InParanoid" id="P9WM87"/>
<dbReference type="OrthoDB" id="4753163at2"/>
<dbReference type="Proteomes" id="UP000001584">
    <property type="component" value="Chromosome"/>
</dbReference>
<dbReference type="GO" id="GO:0009274">
    <property type="term" value="C:peptidoglycan-based cell wall"/>
    <property type="evidence" value="ECO:0007005"/>
    <property type="project" value="MTBBASE"/>
</dbReference>
<dbReference type="GO" id="GO:0005886">
    <property type="term" value="C:plasma membrane"/>
    <property type="evidence" value="ECO:0007005"/>
    <property type="project" value="MTBBASE"/>
</dbReference>
<dbReference type="InterPro" id="IPR012551">
    <property type="entry name" value="DUF1707_SHOCT-like"/>
</dbReference>
<dbReference type="PANTHER" id="PTHR40763:SF4">
    <property type="entry name" value="DUF1707 DOMAIN-CONTAINING PROTEIN"/>
    <property type="match status" value="1"/>
</dbReference>
<dbReference type="PANTHER" id="PTHR40763">
    <property type="entry name" value="MEMBRANE PROTEIN-RELATED"/>
    <property type="match status" value="1"/>
</dbReference>
<dbReference type="Pfam" id="PF08044">
    <property type="entry name" value="DUF1707"/>
    <property type="match status" value="1"/>
</dbReference>
<evidence type="ECO:0000255" key="1"/>
<evidence type="ECO:0000305" key="2"/>
<protein>
    <recommendedName>
        <fullName>Uncharacterized protein Rv0048c</fullName>
    </recommendedName>
</protein>